<evidence type="ECO:0000255" key="1">
    <source>
        <dbReference type="HAMAP-Rule" id="MF_02223"/>
    </source>
</evidence>
<evidence type="ECO:0000269" key="2">
    <source>
    </source>
</evidence>
<evidence type="ECO:0000269" key="3">
    <source>
    </source>
</evidence>
<evidence type="ECO:0000303" key="4">
    <source>
    </source>
</evidence>
<evidence type="ECO:0000305" key="5"/>
<evidence type="ECO:0007829" key="6">
    <source>
        <dbReference type="PDB" id="6JBD"/>
    </source>
</evidence>
<protein>
    <recommendedName>
        <fullName evidence="1 4">Pantoate kinase</fullName>
        <shortName evidence="1 4">PoK</shortName>
        <ecNumber evidence="1 2">2.7.1.169</ecNumber>
    </recommendedName>
</protein>
<feature type="chain" id="PRO_0000409259" description="Pantoate kinase">
    <location>
        <begin position="1"/>
        <end position="300"/>
    </location>
</feature>
<feature type="mutagenesis site" description="Does not affect kinetics toward ATP but decreases affinity for pantoate." evidence="3">
    <original>S</original>
    <variation>A</variation>
    <location>
        <position position="28"/>
    </location>
</feature>
<feature type="mutagenesis site" description="Loss of activity." evidence="3">
    <original>S</original>
    <variation>A</variation>
    <location>
        <position position="104"/>
    </location>
</feature>
<feature type="mutagenesis site" description="Does not affect kinetics toward ATP but significantly decreases affinity for pantoate." evidence="3">
    <original>H</original>
    <variation>A</variation>
    <location>
        <position position="131"/>
    </location>
</feature>
<feature type="mutagenesis site" description="Loss of activity." evidence="3">
    <original>E</original>
    <variation>A</variation>
    <location>
        <position position="134"/>
    </location>
</feature>
<feature type="mutagenesis site" description="Loss of activity." evidence="3">
    <original>D</original>
    <variation>A</variation>
    <location>
        <position position="143"/>
    </location>
</feature>
<feature type="mutagenesis site" description="Decreases affinities for both ATP and pantoate." evidence="3">
    <original>R</original>
    <variation>A</variation>
    <location>
        <position position="155"/>
    </location>
</feature>
<feature type="mutagenesis site" description="Displays a defect in dimer assembly. Does not affect Km for ATP but the affinity for pantoate decreases dramatically." evidence="3">
    <original>T</original>
    <variation>A</variation>
    <location>
        <position position="186"/>
    </location>
</feature>
<feature type="strand" evidence="6">
    <location>
        <begin position="2"/>
        <end position="18"/>
    </location>
</feature>
<feature type="helix" evidence="6">
    <location>
        <begin position="23"/>
        <end position="25"/>
    </location>
</feature>
<feature type="strand" evidence="6">
    <location>
        <begin position="27"/>
        <end position="47"/>
    </location>
</feature>
<feature type="strand" evidence="6">
    <location>
        <begin position="49"/>
        <end position="58"/>
    </location>
</feature>
<feature type="turn" evidence="6">
    <location>
        <begin position="65"/>
        <end position="67"/>
    </location>
</feature>
<feature type="helix" evidence="6">
    <location>
        <begin position="69"/>
        <end position="78"/>
    </location>
</feature>
<feature type="strand" evidence="6">
    <location>
        <begin position="85"/>
        <end position="92"/>
    </location>
</feature>
<feature type="strand" evidence="6">
    <location>
        <begin position="99"/>
        <end position="101"/>
    </location>
</feature>
<feature type="helix" evidence="6">
    <location>
        <begin position="103"/>
        <end position="119"/>
    </location>
</feature>
<feature type="helix" evidence="6">
    <location>
        <begin position="123"/>
        <end position="136"/>
    </location>
</feature>
<feature type="helix" evidence="6">
    <location>
        <begin position="143"/>
        <end position="149"/>
    </location>
</feature>
<feature type="strand" evidence="6">
    <location>
        <begin position="151"/>
        <end position="157"/>
    </location>
</feature>
<feature type="turn" evidence="6">
    <location>
        <begin position="161"/>
        <end position="163"/>
    </location>
</feature>
<feature type="strand" evidence="6">
    <location>
        <begin position="165"/>
        <end position="168"/>
    </location>
</feature>
<feature type="strand" evidence="6">
    <location>
        <begin position="175"/>
        <end position="182"/>
    </location>
</feature>
<feature type="helix" evidence="6">
    <location>
        <begin position="193"/>
        <end position="211"/>
    </location>
</feature>
<feature type="helix" evidence="6">
    <location>
        <begin position="215"/>
        <end position="228"/>
    </location>
</feature>
<feature type="helix" evidence="6">
    <location>
        <begin position="234"/>
        <end position="243"/>
    </location>
</feature>
<feature type="turn" evidence="6">
    <location>
        <begin position="244"/>
        <end position="246"/>
    </location>
</feature>
<feature type="strand" evidence="6">
    <location>
        <begin position="257"/>
        <end position="264"/>
    </location>
</feature>
<feature type="helix" evidence="6">
    <location>
        <begin position="266"/>
        <end position="277"/>
    </location>
</feature>
<feature type="turn" evidence="6">
    <location>
        <begin position="278"/>
        <end position="280"/>
    </location>
</feature>
<feature type="strand" evidence="6">
    <location>
        <begin position="284"/>
        <end position="288"/>
    </location>
</feature>
<feature type="strand" evidence="6">
    <location>
        <begin position="294"/>
        <end position="297"/>
    </location>
</feature>
<accession>Q5JHF1</accession>
<gene>
    <name type="ordered locus">TK2141</name>
</gene>
<reference key="1">
    <citation type="journal article" date="2005" name="Genome Res.">
        <title>Complete genome sequence of the hyperthermophilic archaeon Thermococcus kodakaraensis KOD1 and comparison with Pyrococcus genomes.</title>
        <authorList>
            <person name="Fukui T."/>
            <person name="Atomi H."/>
            <person name="Kanai T."/>
            <person name="Matsumi R."/>
            <person name="Fujiwara S."/>
            <person name="Imanaka T."/>
        </authorList>
    </citation>
    <scope>NUCLEOTIDE SEQUENCE [LARGE SCALE GENOMIC DNA]</scope>
    <source>
        <strain>ATCC BAA-918 / JCM 12380 / KOD1</strain>
    </source>
</reference>
<reference key="2">
    <citation type="journal article" date="2009" name="J. Biol. Chem.">
        <title>Pantoate kinase and phosphopantothenate synthetase, two novel enzymes necessary for CoA biosynthesis in the Archaea.</title>
        <authorList>
            <person name="Yokooji Y."/>
            <person name="Tomita H."/>
            <person name="Atomi H."/>
            <person name="Imanaka T."/>
        </authorList>
    </citation>
    <scope>FUNCTION</scope>
    <scope>CATALYTIC ACTIVITY</scope>
    <scope>ROLE IN COA BIOSYNTHESIS</scope>
    <scope>BIOPHYSICOCHEMICAL PROPERTIES</scope>
    <scope>PATHWAY</scope>
    <scope>SUBUNIT</scope>
    <scope>DISRUPTION PHENOTYPE</scope>
    <source>
        <strain>ATCC BAA-918 / JCM 12380 / KOD1</strain>
    </source>
</reference>
<reference key="3">
    <citation type="journal article" date="2012" name="J. Bacteriol.">
        <title>Biochemical characterization of pantoate kinase, a novel enzyme necessary for coenzyme A biosynthesis in the Archaea.</title>
        <authorList>
            <person name="Tomita H."/>
            <person name="Yokooji Y."/>
            <person name="Ishibashi T."/>
            <person name="Imanaka T."/>
            <person name="Atomi H."/>
        </authorList>
    </citation>
    <scope>FUNCTION</scope>
    <scope>CATALYTIC ACTIVITY</scope>
    <scope>ACTIVITY REGULATION</scope>
    <scope>BIOPHYSICOCHEMICAL PROPERTIES</scope>
    <scope>MUTAGENESIS OF SER-28; SER-104; HIS-131; GLU-134; ASP-143; ARG-155 AND THR-186</scope>
    <source>
        <strain>ATCC BAA-918 / JCM 12380 / KOD1</strain>
    </source>
</reference>
<sequence length="300" mass="32750">MLIRAFIPAHITAFFVPVFHEEPLKAGSLGAGVNLSKGTNVFASIETGTLERHIHVAFNGEPVKREEAEITYYVAEKLVPKDFLGEVEVWQYFDFPNGYGFGNSAGGALGTALALSYAFGGTWLRAAQLAHEAEVKHKGGLGDVIGQLAGGIEVRIKPGGPGIGVTDNLFFEDYKVLVVPLGRLSTREVLDGDVVKAIEVEGRKALEELLKEPKPERMMVLARNFAEKTGLLPGELSEIARELDKVLKNPSSMIMLGKGLFALVRDEEAEKAKQLLSDMNLPYDIAEIYTERPKVGRWVG</sequence>
<keyword id="KW-0002">3D-structure</keyword>
<keyword id="KW-0067">ATP-binding</keyword>
<keyword id="KW-0173">Coenzyme A biosynthesis</keyword>
<keyword id="KW-0418">Kinase</keyword>
<keyword id="KW-0547">Nucleotide-binding</keyword>
<keyword id="KW-1185">Reference proteome</keyword>
<keyword id="KW-0808">Transferase</keyword>
<comment type="function">
    <text evidence="2 3">Phosphorylates (R)-pantoate to form (R)-4-phosphopantoate in the CoA biosynthesis pathway (PubMed:19666462, PubMed:22865846). Displays broad nucleotide specificity and utilizes ATP, GTP, UTP, and CTP with comparable catalytic efficiencies (PubMed:22865846).</text>
</comment>
<comment type="catalytic activity">
    <reaction evidence="1 2 3">
        <text>(R)-pantoate + ATP = (R)-4-phosphopantoate + ADP + H(+)</text>
        <dbReference type="Rhea" id="RHEA:28246"/>
        <dbReference type="ChEBI" id="CHEBI:15378"/>
        <dbReference type="ChEBI" id="CHEBI:15980"/>
        <dbReference type="ChEBI" id="CHEBI:30616"/>
        <dbReference type="ChEBI" id="CHEBI:61294"/>
        <dbReference type="ChEBI" id="CHEBI:456216"/>
        <dbReference type="EC" id="2.7.1.169"/>
    </reaction>
</comment>
<comment type="activity regulation">
    <text evidence="3">Moderately stimulated in the presence of potassium cations. Inhibited by increasing concentrations of pantoate. Activity is not affected by CoA/acetyl-CoA.</text>
</comment>
<comment type="biophysicochemical properties">
    <kinetics>
        <KM evidence="2">0.47 mM for ATP</KM>
        <KM evidence="3">0.45 mM for ATP</KM>
        <KM evidence="3">0.43 mM for GTP</KM>
        <KM evidence="3">0.17 mM for UTP</KM>
        <KM evidence="3">0.34 mM for CTP</KM>
        <KM evidence="2">1.2 mM for (R)-pantoate</KM>
        <KM evidence="2">1.3 mM for (R)-pantothenate</KM>
        <Vmax evidence="2">2870.0 nmol/min/mg enzyme toward (R)-pantoate</Vmax>
        <Vmax evidence="2">390.0 nmol/min/mg enzyme toward (R)-pantothenate</Vmax>
        <Vmax evidence="3">1.82 umol/min/mg enzyme toward ATP</Vmax>
        <Vmax evidence="3">0.58 umol/min/mg enzyme toward GTP</Vmax>
        <Vmax evidence="3">2.03 umol/min/mg enzyme toward UTP</Vmax>
        <Vmax evidence="3">0.87 umol/min/mg enzyme toward CTP</Vmax>
    </kinetics>
    <phDependence>
        <text evidence="3">Optimum pH is 7.5.</text>
    </phDependence>
    <temperatureDependence>
        <text evidence="3">Optimum temperature is 80 degrees Celsius.</text>
    </temperatureDependence>
</comment>
<comment type="pathway">
    <text evidence="1 2">Cofactor biosynthesis; coenzyme A biosynthesis.</text>
</comment>
<comment type="subunit">
    <text evidence="2">Homodimer.</text>
</comment>
<comment type="disruption phenotype">
    <text evidence="2">Only viable in the presence of CoA or 4'-phosphopantothenate.</text>
</comment>
<comment type="similarity">
    <text evidence="1 5">Belongs to the GHMP kinase family. PoK subfamily.</text>
</comment>
<dbReference type="EC" id="2.7.1.169" evidence="1 2"/>
<dbReference type="EMBL" id="AP006878">
    <property type="protein sequence ID" value="BAD86330.1"/>
    <property type="molecule type" value="Genomic_DNA"/>
</dbReference>
<dbReference type="RefSeq" id="WP_011251091.1">
    <property type="nucleotide sequence ID" value="NC_006624.1"/>
</dbReference>
<dbReference type="PDB" id="6JBC">
    <property type="method" value="X-ray"/>
    <property type="resolution" value="2.70 A"/>
    <property type="chains" value="A=1-300"/>
</dbReference>
<dbReference type="PDB" id="6JBD">
    <property type="method" value="X-ray"/>
    <property type="resolution" value="2.50 A"/>
    <property type="chains" value="A=1-300"/>
</dbReference>
<dbReference type="PDBsum" id="6JBC"/>
<dbReference type="PDBsum" id="6JBD"/>
<dbReference type="SMR" id="Q5JHF1"/>
<dbReference type="FunCoup" id="Q5JHF1">
    <property type="interactions" value="61"/>
</dbReference>
<dbReference type="STRING" id="69014.TK2141"/>
<dbReference type="EnsemblBacteria" id="BAD86330">
    <property type="protein sequence ID" value="BAD86330"/>
    <property type="gene ID" value="TK2141"/>
</dbReference>
<dbReference type="GeneID" id="78448678"/>
<dbReference type="KEGG" id="tko:TK2141"/>
<dbReference type="PATRIC" id="fig|69014.16.peg.2097"/>
<dbReference type="eggNOG" id="arCOG04263">
    <property type="taxonomic scope" value="Archaea"/>
</dbReference>
<dbReference type="HOGENOM" id="CLU_081191_0_0_2"/>
<dbReference type="InParanoid" id="Q5JHF1"/>
<dbReference type="OrthoDB" id="85822at2157"/>
<dbReference type="PhylomeDB" id="Q5JHF1"/>
<dbReference type="BioCyc" id="MetaCyc:MONOMER-15970"/>
<dbReference type="BRENDA" id="2.7.1.169">
    <property type="organism ID" value="5246"/>
</dbReference>
<dbReference type="BRENDA" id="2.7.1.33">
    <property type="organism ID" value="5246"/>
</dbReference>
<dbReference type="SABIO-RK" id="Q5JHF1"/>
<dbReference type="UniPathway" id="UPA00241"/>
<dbReference type="Proteomes" id="UP000000536">
    <property type="component" value="Chromosome"/>
</dbReference>
<dbReference type="GO" id="GO:0005524">
    <property type="term" value="F:ATP binding"/>
    <property type="evidence" value="ECO:0007669"/>
    <property type="project" value="UniProtKB-KW"/>
</dbReference>
<dbReference type="GO" id="GO:0016301">
    <property type="term" value="F:kinase activity"/>
    <property type="evidence" value="ECO:0007669"/>
    <property type="project" value="UniProtKB-UniRule"/>
</dbReference>
<dbReference type="GO" id="GO:0015937">
    <property type="term" value="P:coenzyme A biosynthetic process"/>
    <property type="evidence" value="ECO:0007669"/>
    <property type="project" value="UniProtKB-UniRule"/>
</dbReference>
<dbReference type="HAMAP" id="MF_02223">
    <property type="entry name" value="Pantoate_kinase"/>
    <property type="match status" value="1"/>
</dbReference>
<dbReference type="InterPro" id="IPR006204">
    <property type="entry name" value="GHMP_kinase_N_dom"/>
</dbReference>
<dbReference type="InterPro" id="IPR053616">
    <property type="entry name" value="GHMP_kinase_PoK-type"/>
</dbReference>
<dbReference type="InterPro" id="IPR012043">
    <property type="entry name" value="PoK"/>
</dbReference>
<dbReference type="InterPro" id="IPR020568">
    <property type="entry name" value="Ribosomal_Su5_D2-typ_SF"/>
</dbReference>
<dbReference type="NCBIfam" id="NF041122">
    <property type="entry name" value="panto_kin_Thplsm"/>
    <property type="match status" value="1"/>
</dbReference>
<dbReference type="PANTHER" id="PTHR42282:SF1">
    <property type="entry name" value="PANTOATE KINASE"/>
    <property type="match status" value="1"/>
</dbReference>
<dbReference type="PANTHER" id="PTHR42282">
    <property type="entry name" value="PANTOATE KINASE-RELATED"/>
    <property type="match status" value="1"/>
</dbReference>
<dbReference type="Pfam" id="PF00288">
    <property type="entry name" value="GHMP_kinases_N"/>
    <property type="match status" value="1"/>
</dbReference>
<dbReference type="PIRSF" id="PIRSF016896">
    <property type="entry name" value="GHMP_arc_MJ0969"/>
    <property type="match status" value="1"/>
</dbReference>
<dbReference type="SUPFAM" id="SSF54211">
    <property type="entry name" value="Ribosomal protein S5 domain 2-like"/>
    <property type="match status" value="1"/>
</dbReference>
<organism>
    <name type="scientific">Thermococcus kodakarensis (strain ATCC BAA-918 / JCM 12380 / KOD1)</name>
    <name type="common">Pyrococcus kodakaraensis (strain KOD1)</name>
    <dbReference type="NCBI Taxonomy" id="69014"/>
    <lineage>
        <taxon>Archaea</taxon>
        <taxon>Methanobacteriati</taxon>
        <taxon>Methanobacteriota</taxon>
        <taxon>Thermococci</taxon>
        <taxon>Thermococcales</taxon>
        <taxon>Thermococcaceae</taxon>
        <taxon>Thermococcus</taxon>
    </lineage>
</organism>
<proteinExistence type="evidence at protein level"/>
<name>POK_THEKO</name>